<protein>
    <recommendedName>
        <fullName evidence="1">Ribosomal RNA small subunit methyltransferase H</fullName>
        <ecNumber evidence="1">2.1.1.199</ecNumber>
    </recommendedName>
    <alternativeName>
        <fullName evidence="1">16S rRNA m(4)C1402 methyltransferase</fullName>
    </alternativeName>
    <alternativeName>
        <fullName evidence="1">rRNA (cytosine-N(4)-)-methyltransferase RsmH</fullName>
    </alternativeName>
</protein>
<sequence>MKSGRGDESPLAAGGPARHVPVLREEVVAALDCKKGGFYLDATFGAGGYTRALLAEPETHVLAIDRDPEAIAAGRALEAESAGRLILAHGRFSTLADIAAAEGIPAFDGIVFDIGVSSMQLDQPERGFSFRGEGPLDMRMESRGPSAADLVNTADEQRLADIFYYFGEERASRRIARAIVTDRAHTPFTTTRQLAELIARVNPGKPGDIHPATRVFQALRIAVNEELLELVRALAAAEALLREGGRLVVVTFHSLEDRIVKQFLAARSGRGQAVSRPLPGEPALAPPTFILPGKQPVLPSPEEIAVNPRARSAKLRFGLRTAAPARGLESGLLPLATLPETSHPKSASHSKSRRR</sequence>
<proteinExistence type="inferred from homology"/>
<comment type="function">
    <text evidence="1">Specifically methylates the N4 position of cytidine in position 1402 (C1402) of 16S rRNA.</text>
</comment>
<comment type="catalytic activity">
    <reaction evidence="1">
        <text>cytidine(1402) in 16S rRNA + S-adenosyl-L-methionine = N(4)-methylcytidine(1402) in 16S rRNA + S-adenosyl-L-homocysteine + H(+)</text>
        <dbReference type="Rhea" id="RHEA:42928"/>
        <dbReference type="Rhea" id="RHEA-COMP:10286"/>
        <dbReference type="Rhea" id="RHEA-COMP:10287"/>
        <dbReference type="ChEBI" id="CHEBI:15378"/>
        <dbReference type="ChEBI" id="CHEBI:57856"/>
        <dbReference type="ChEBI" id="CHEBI:59789"/>
        <dbReference type="ChEBI" id="CHEBI:74506"/>
        <dbReference type="ChEBI" id="CHEBI:82748"/>
        <dbReference type="EC" id="2.1.1.199"/>
    </reaction>
</comment>
<comment type="subcellular location">
    <subcellularLocation>
        <location evidence="1">Cytoplasm</location>
    </subcellularLocation>
</comment>
<comment type="similarity">
    <text evidence="1">Belongs to the methyltransferase superfamily. RsmH family.</text>
</comment>
<organism>
    <name type="scientific">Beijerinckia indica subsp. indica (strain ATCC 9039 / DSM 1715 / NCIMB 8712)</name>
    <dbReference type="NCBI Taxonomy" id="395963"/>
    <lineage>
        <taxon>Bacteria</taxon>
        <taxon>Pseudomonadati</taxon>
        <taxon>Pseudomonadota</taxon>
        <taxon>Alphaproteobacteria</taxon>
        <taxon>Hyphomicrobiales</taxon>
        <taxon>Beijerinckiaceae</taxon>
        <taxon>Beijerinckia</taxon>
    </lineage>
</organism>
<feature type="chain" id="PRO_0000386743" description="Ribosomal RNA small subunit methyltransferase H">
    <location>
        <begin position="1"/>
        <end position="355"/>
    </location>
</feature>
<feature type="region of interest" description="Disordered" evidence="2">
    <location>
        <begin position="332"/>
        <end position="355"/>
    </location>
</feature>
<feature type="compositionally biased region" description="Basic residues" evidence="2">
    <location>
        <begin position="346"/>
        <end position="355"/>
    </location>
</feature>
<feature type="binding site" evidence="1">
    <location>
        <begin position="47"/>
        <end position="49"/>
    </location>
    <ligand>
        <name>S-adenosyl-L-methionine</name>
        <dbReference type="ChEBI" id="CHEBI:59789"/>
    </ligand>
</feature>
<feature type="binding site" evidence="1">
    <location>
        <position position="65"/>
    </location>
    <ligand>
        <name>S-adenosyl-L-methionine</name>
        <dbReference type="ChEBI" id="CHEBI:59789"/>
    </ligand>
</feature>
<feature type="binding site" evidence="1">
    <location>
        <position position="92"/>
    </location>
    <ligand>
        <name>S-adenosyl-L-methionine</name>
        <dbReference type="ChEBI" id="CHEBI:59789"/>
    </ligand>
</feature>
<feature type="binding site" evidence="1">
    <location>
        <position position="113"/>
    </location>
    <ligand>
        <name>S-adenosyl-L-methionine</name>
        <dbReference type="ChEBI" id="CHEBI:59789"/>
    </ligand>
</feature>
<feature type="binding site" evidence="1">
    <location>
        <position position="120"/>
    </location>
    <ligand>
        <name>S-adenosyl-L-methionine</name>
        <dbReference type="ChEBI" id="CHEBI:59789"/>
    </ligand>
</feature>
<evidence type="ECO:0000255" key="1">
    <source>
        <dbReference type="HAMAP-Rule" id="MF_01007"/>
    </source>
</evidence>
<evidence type="ECO:0000256" key="2">
    <source>
        <dbReference type="SAM" id="MobiDB-lite"/>
    </source>
</evidence>
<name>RSMH_BEII9</name>
<dbReference type="EC" id="2.1.1.199" evidence="1"/>
<dbReference type="EMBL" id="CP001016">
    <property type="protein sequence ID" value="ACB94334.1"/>
    <property type="molecule type" value="Genomic_DNA"/>
</dbReference>
<dbReference type="RefSeq" id="WP_012383692.1">
    <property type="nucleotide sequence ID" value="NC_010581.1"/>
</dbReference>
<dbReference type="SMR" id="B2IGF2"/>
<dbReference type="STRING" id="395963.Bind_0684"/>
<dbReference type="KEGG" id="bid:Bind_0684"/>
<dbReference type="eggNOG" id="COG0275">
    <property type="taxonomic scope" value="Bacteria"/>
</dbReference>
<dbReference type="HOGENOM" id="CLU_038422_1_1_5"/>
<dbReference type="OrthoDB" id="9806637at2"/>
<dbReference type="Proteomes" id="UP000001695">
    <property type="component" value="Chromosome"/>
</dbReference>
<dbReference type="GO" id="GO:0005737">
    <property type="term" value="C:cytoplasm"/>
    <property type="evidence" value="ECO:0007669"/>
    <property type="project" value="UniProtKB-SubCell"/>
</dbReference>
<dbReference type="GO" id="GO:0071424">
    <property type="term" value="F:rRNA (cytosine-N4-)-methyltransferase activity"/>
    <property type="evidence" value="ECO:0007669"/>
    <property type="project" value="UniProtKB-UniRule"/>
</dbReference>
<dbReference type="GO" id="GO:0070475">
    <property type="term" value="P:rRNA base methylation"/>
    <property type="evidence" value="ECO:0007669"/>
    <property type="project" value="UniProtKB-UniRule"/>
</dbReference>
<dbReference type="CDD" id="cd02440">
    <property type="entry name" value="AdoMet_MTases"/>
    <property type="match status" value="1"/>
</dbReference>
<dbReference type="FunFam" id="1.10.150.170:FF:000003">
    <property type="entry name" value="Ribosomal RNA small subunit methyltransferase H"/>
    <property type="match status" value="1"/>
</dbReference>
<dbReference type="Gene3D" id="1.10.150.170">
    <property type="entry name" value="Putative methyltransferase TM0872, insert domain"/>
    <property type="match status" value="1"/>
</dbReference>
<dbReference type="Gene3D" id="3.40.50.150">
    <property type="entry name" value="Vaccinia Virus protein VP39"/>
    <property type="match status" value="1"/>
</dbReference>
<dbReference type="HAMAP" id="MF_01007">
    <property type="entry name" value="16SrRNA_methyltr_H"/>
    <property type="match status" value="1"/>
</dbReference>
<dbReference type="InterPro" id="IPR002903">
    <property type="entry name" value="RsmH"/>
</dbReference>
<dbReference type="InterPro" id="IPR023397">
    <property type="entry name" value="SAM-dep_MeTrfase_MraW_recog"/>
</dbReference>
<dbReference type="InterPro" id="IPR029063">
    <property type="entry name" value="SAM-dependent_MTases_sf"/>
</dbReference>
<dbReference type="NCBIfam" id="TIGR00006">
    <property type="entry name" value="16S rRNA (cytosine(1402)-N(4))-methyltransferase RsmH"/>
    <property type="match status" value="1"/>
</dbReference>
<dbReference type="PANTHER" id="PTHR11265:SF0">
    <property type="entry name" value="12S RRNA N4-METHYLCYTIDINE METHYLTRANSFERASE"/>
    <property type="match status" value="1"/>
</dbReference>
<dbReference type="PANTHER" id="PTHR11265">
    <property type="entry name" value="S-ADENOSYL-METHYLTRANSFERASE MRAW"/>
    <property type="match status" value="1"/>
</dbReference>
<dbReference type="Pfam" id="PF01795">
    <property type="entry name" value="Methyltransf_5"/>
    <property type="match status" value="1"/>
</dbReference>
<dbReference type="PIRSF" id="PIRSF004486">
    <property type="entry name" value="MraW"/>
    <property type="match status" value="1"/>
</dbReference>
<dbReference type="SUPFAM" id="SSF81799">
    <property type="entry name" value="Putative methyltransferase TM0872, insert domain"/>
    <property type="match status" value="1"/>
</dbReference>
<dbReference type="SUPFAM" id="SSF53335">
    <property type="entry name" value="S-adenosyl-L-methionine-dependent methyltransferases"/>
    <property type="match status" value="1"/>
</dbReference>
<reference key="1">
    <citation type="journal article" date="2010" name="J. Bacteriol.">
        <title>Complete genome sequence of Beijerinckia indica subsp. indica.</title>
        <authorList>
            <person name="Tamas I."/>
            <person name="Dedysh S.N."/>
            <person name="Liesack W."/>
            <person name="Stott M.B."/>
            <person name="Alam M."/>
            <person name="Murrell J.C."/>
            <person name="Dunfield P.F."/>
        </authorList>
    </citation>
    <scope>NUCLEOTIDE SEQUENCE [LARGE SCALE GENOMIC DNA]</scope>
    <source>
        <strain>ATCC 9039 / DSM 1715 / NCIMB 8712</strain>
    </source>
</reference>
<gene>
    <name evidence="1" type="primary">rsmH</name>
    <name type="synonym">mraW</name>
    <name type="ordered locus">Bind_0684</name>
</gene>
<keyword id="KW-0963">Cytoplasm</keyword>
<keyword id="KW-0489">Methyltransferase</keyword>
<keyword id="KW-1185">Reference proteome</keyword>
<keyword id="KW-0698">rRNA processing</keyword>
<keyword id="KW-0949">S-adenosyl-L-methionine</keyword>
<keyword id="KW-0808">Transferase</keyword>
<accession>B2IGF2</accession>